<reference key="1">
    <citation type="submission" date="1997-12" db="EMBL/GenBank/DDBJ databases">
        <title>Identification of N-acyltransferase (lnt) gene from Pseudonomas aeruginosa.</title>
        <authorList>
            <person name="Qi H.-Y."/>
            <person name="Gupta S.D."/>
            <person name="Wu H.C."/>
            <person name="Rick P.D."/>
        </authorList>
    </citation>
    <scope>NUCLEOTIDE SEQUENCE [GENOMIC DNA]</scope>
</reference>
<reference key="2">
    <citation type="journal article" date="2000" name="Nature">
        <title>Complete genome sequence of Pseudomonas aeruginosa PAO1, an opportunistic pathogen.</title>
        <authorList>
            <person name="Stover C.K."/>
            <person name="Pham X.-Q.T."/>
            <person name="Erwin A.L."/>
            <person name="Mizoguchi S.D."/>
            <person name="Warrener P."/>
            <person name="Hickey M.J."/>
            <person name="Brinkman F.S.L."/>
            <person name="Hufnagle W.O."/>
            <person name="Kowalik D.J."/>
            <person name="Lagrou M."/>
            <person name="Garber R.L."/>
            <person name="Goltry L."/>
            <person name="Tolentino E."/>
            <person name="Westbrock-Wadman S."/>
            <person name="Yuan Y."/>
            <person name="Brody L.L."/>
            <person name="Coulter S.N."/>
            <person name="Folger K.R."/>
            <person name="Kas A."/>
            <person name="Larbig K."/>
            <person name="Lim R.M."/>
            <person name="Smith K.A."/>
            <person name="Spencer D.H."/>
            <person name="Wong G.K.-S."/>
            <person name="Wu Z."/>
            <person name="Paulsen I.T."/>
            <person name="Reizer J."/>
            <person name="Saier M.H. Jr."/>
            <person name="Hancock R.E.W."/>
            <person name="Lory S."/>
            <person name="Olson M.V."/>
        </authorList>
    </citation>
    <scope>NUCLEOTIDE SEQUENCE [LARGE SCALE GENOMIC DNA]</scope>
    <source>
        <strain>ATCC 15692 / DSM 22644 / CIP 104116 / JCM 14847 / LMG 12228 / 1C / PRS 101 / PAO1</strain>
    </source>
</reference>
<dbReference type="EC" id="2.3.1.269" evidence="1"/>
<dbReference type="EMBL" id="AF038595">
    <property type="protein sequence ID" value="AAC97167.1"/>
    <property type="molecule type" value="Genomic_DNA"/>
</dbReference>
<dbReference type="EMBL" id="AE004091">
    <property type="protein sequence ID" value="AAG07371.1"/>
    <property type="molecule type" value="Genomic_DNA"/>
</dbReference>
<dbReference type="PIR" id="B83148">
    <property type="entry name" value="B83148"/>
</dbReference>
<dbReference type="RefSeq" id="NP_252673.1">
    <property type="nucleotide sequence ID" value="NC_002516.2"/>
</dbReference>
<dbReference type="RefSeq" id="WP_003118259.1">
    <property type="nucleotide sequence ID" value="NZ_QZGE01000001.1"/>
</dbReference>
<dbReference type="PDB" id="5N6M">
    <property type="method" value="X-ray"/>
    <property type="resolution" value="3.10 A"/>
    <property type="chains" value="A=1-511"/>
</dbReference>
<dbReference type="PDB" id="8AQ2">
    <property type="method" value="X-ray"/>
    <property type="resolution" value="2.60 A"/>
    <property type="chains" value="A=1-511"/>
</dbReference>
<dbReference type="PDBsum" id="5N6M"/>
<dbReference type="PDBsum" id="8AQ2"/>
<dbReference type="SMR" id="Q9ZI86"/>
<dbReference type="FunCoup" id="Q9ZI86">
    <property type="interactions" value="413"/>
</dbReference>
<dbReference type="STRING" id="208964.PA3984"/>
<dbReference type="PaxDb" id="208964-PA3984"/>
<dbReference type="GeneID" id="878907"/>
<dbReference type="KEGG" id="pae:PA3984"/>
<dbReference type="PATRIC" id="fig|208964.12.peg.4176"/>
<dbReference type="PseudoCAP" id="PA3984"/>
<dbReference type="HOGENOM" id="CLU_019563_3_0_6"/>
<dbReference type="InParanoid" id="Q9ZI86"/>
<dbReference type="OrthoDB" id="9804277at2"/>
<dbReference type="PhylomeDB" id="Q9ZI86"/>
<dbReference type="BioCyc" id="PAER208964:G1FZ6-4058-MONOMER"/>
<dbReference type="BRENDA" id="2.3.1.269">
    <property type="organism ID" value="5087"/>
</dbReference>
<dbReference type="UniPathway" id="UPA00666"/>
<dbReference type="PHI-base" id="PHI:3782"/>
<dbReference type="Proteomes" id="UP000002438">
    <property type="component" value="Chromosome"/>
</dbReference>
<dbReference type="GO" id="GO:0005886">
    <property type="term" value="C:plasma membrane"/>
    <property type="evidence" value="ECO:0007669"/>
    <property type="project" value="UniProtKB-SubCell"/>
</dbReference>
<dbReference type="GO" id="GO:0016410">
    <property type="term" value="F:N-acyltransferase activity"/>
    <property type="evidence" value="ECO:0007669"/>
    <property type="project" value="UniProtKB-UniRule"/>
</dbReference>
<dbReference type="GO" id="GO:0042158">
    <property type="term" value="P:lipoprotein biosynthetic process"/>
    <property type="evidence" value="ECO:0007669"/>
    <property type="project" value="UniProtKB-UniRule"/>
</dbReference>
<dbReference type="CDD" id="cd07571">
    <property type="entry name" value="ALP_N-acyl_transferase"/>
    <property type="match status" value="1"/>
</dbReference>
<dbReference type="Gene3D" id="3.60.110.10">
    <property type="entry name" value="Carbon-nitrogen hydrolase"/>
    <property type="match status" value="1"/>
</dbReference>
<dbReference type="HAMAP" id="MF_01148">
    <property type="entry name" value="Lnt"/>
    <property type="match status" value="1"/>
</dbReference>
<dbReference type="InterPro" id="IPR004563">
    <property type="entry name" value="Apolipo_AcylTrfase"/>
</dbReference>
<dbReference type="InterPro" id="IPR003010">
    <property type="entry name" value="C-N_Hydrolase"/>
</dbReference>
<dbReference type="InterPro" id="IPR036526">
    <property type="entry name" value="C-N_Hydrolase_sf"/>
</dbReference>
<dbReference type="InterPro" id="IPR045378">
    <property type="entry name" value="LNT_N"/>
</dbReference>
<dbReference type="NCBIfam" id="TIGR00546">
    <property type="entry name" value="lnt"/>
    <property type="match status" value="1"/>
</dbReference>
<dbReference type="PANTHER" id="PTHR38686">
    <property type="entry name" value="APOLIPOPROTEIN N-ACYLTRANSFERASE"/>
    <property type="match status" value="1"/>
</dbReference>
<dbReference type="PANTHER" id="PTHR38686:SF1">
    <property type="entry name" value="APOLIPOPROTEIN N-ACYLTRANSFERASE"/>
    <property type="match status" value="1"/>
</dbReference>
<dbReference type="Pfam" id="PF00795">
    <property type="entry name" value="CN_hydrolase"/>
    <property type="match status" value="1"/>
</dbReference>
<dbReference type="Pfam" id="PF20154">
    <property type="entry name" value="LNT_N"/>
    <property type="match status" value="1"/>
</dbReference>
<dbReference type="SUPFAM" id="SSF56317">
    <property type="entry name" value="Carbon-nitrogen hydrolase"/>
    <property type="match status" value="1"/>
</dbReference>
<dbReference type="PROSITE" id="PS50263">
    <property type="entry name" value="CN_HYDROLASE"/>
    <property type="match status" value="1"/>
</dbReference>
<sequence>MRWISRPGWPGHLLALAAGALTPLALAPFDYWPLAILSIALLYLGLRGLPGKSALWRGWWYGFGAFGAGTSWIYVSIHDYGAASVPLASLLMLGFTAGVAFFFALPAWLWARCLRRDNAPLGDALAFAALWLALELFRSWFLTGFPWLYAGYSQLQGPLAGLVPVGGVWLSSFVIALSAALLVNLPRLFPHGASLLLGLVLLLGPWAAGLYLKGHAWTHSAGEPLRVVAIQGNIAQELKWDPNQVRAQLDLYRDLSLPQQDVDLIVWPETAVPILQDMASGYLGAMGQVADEKNAALITGVPVRERLADGKSRYFNGITVVGEGAGTYLKQKLVPFGEYVPLQDLLRGLIAFFDLPMSDFARGPADQPLLKAKGYQIAPYICYEVVYPEFAAALAAQSQVLLTVSNDTWFGTSIGPLQHLQMAQMRALESGRWMIRATNNGVTGLIDPYGRIVRQIPQFQQGILRGEVIPMQGLTPYLQYRVWPLAGLAGVLLLWALLGRQLRPQERRLFG</sequence>
<accession>Q9ZI86</accession>
<evidence type="ECO:0000255" key="1">
    <source>
        <dbReference type="HAMAP-Rule" id="MF_01148"/>
    </source>
</evidence>
<evidence type="ECO:0000305" key="2"/>
<evidence type="ECO:0007829" key="3">
    <source>
        <dbReference type="PDB" id="5N6M"/>
    </source>
</evidence>
<evidence type="ECO:0007829" key="4">
    <source>
        <dbReference type="PDB" id="8AQ2"/>
    </source>
</evidence>
<keyword id="KW-0002">3D-structure</keyword>
<keyword id="KW-0012">Acyltransferase</keyword>
<keyword id="KW-0997">Cell inner membrane</keyword>
<keyword id="KW-1003">Cell membrane</keyword>
<keyword id="KW-0472">Membrane</keyword>
<keyword id="KW-1185">Reference proteome</keyword>
<keyword id="KW-0808">Transferase</keyword>
<keyword id="KW-0812">Transmembrane</keyword>
<keyword id="KW-1133">Transmembrane helix</keyword>
<gene>
    <name evidence="1" type="primary">lnt</name>
    <name type="synonym">cutE</name>
    <name type="ordered locus">PA3984</name>
</gene>
<proteinExistence type="evidence at protein level"/>
<name>LNT_PSEAE</name>
<feature type="chain" id="PRO_0000178084" description="Apolipoprotein N-acyltransferase">
    <location>
        <begin position="1"/>
        <end position="511"/>
    </location>
</feature>
<feature type="transmembrane region" description="Helical" evidence="1">
    <location>
        <begin position="7"/>
        <end position="29"/>
    </location>
</feature>
<feature type="transmembrane region" description="Helical" evidence="1">
    <location>
        <begin position="58"/>
        <end position="78"/>
    </location>
</feature>
<feature type="transmembrane region" description="Helical" evidence="1">
    <location>
        <begin position="90"/>
        <end position="110"/>
    </location>
</feature>
<feature type="transmembrane region" description="Helical" evidence="1">
    <location>
        <begin position="125"/>
        <end position="145"/>
    </location>
</feature>
<feature type="transmembrane region" description="Helical" evidence="1">
    <location>
        <begin position="163"/>
        <end position="183"/>
    </location>
</feature>
<feature type="transmembrane region" description="Helical" evidence="1">
    <location>
        <begin position="192"/>
        <end position="212"/>
    </location>
</feature>
<feature type="transmembrane region" description="Helical" evidence="1">
    <location>
        <begin position="482"/>
        <end position="502"/>
    </location>
</feature>
<feature type="domain" description="CN hydrolase" evidence="1">
    <location>
        <begin position="230"/>
        <end position="470"/>
    </location>
</feature>
<feature type="active site" description="Proton acceptor" evidence="1">
    <location>
        <position position="269"/>
    </location>
</feature>
<feature type="active site" evidence="1">
    <location>
        <position position="330"/>
    </location>
</feature>
<feature type="active site" description="Nucleophile" evidence="1">
    <location>
        <position position="382"/>
    </location>
</feature>
<feature type="helix" evidence="4">
    <location>
        <begin position="2"/>
        <end position="5"/>
    </location>
</feature>
<feature type="strand" evidence="4">
    <location>
        <begin position="6"/>
        <end position="8"/>
    </location>
</feature>
<feature type="helix" evidence="4">
    <location>
        <begin position="9"/>
        <end position="25"/>
    </location>
</feature>
<feature type="turn" evidence="4">
    <location>
        <begin position="27"/>
        <end position="29"/>
    </location>
</feature>
<feature type="helix" evidence="4">
    <location>
        <begin position="33"/>
        <end position="45"/>
    </location>
</feature>
<feature type="helix" evidence="4">
    <location>
        <begin position="51"/>
        <end position="69"/>
    </location>
</feature>
<feature type="helix" evidence="4">
    <location>
        <begin position="71"/>
        <end position="73"/>
    </location>
</feature>
<feature type="helix" evidence="4">
    <location>
        <begin position="74"/>
        <end position="79"/>
    </location>
</feature>
<feature type="helix" evidence="4">
    <location>
        <begin position="85"/>
        <end position="99"/>
    </location>
</feature>
<feature type="helix" evidence="4">
    <location>
        <begin position="101"/>
        <end position="113"/>
    </location>
</feature>
<feature type="helix" evidence="4">
    <location>
        <begin position="120"/>
        <end position="140"/>
    </location>
</feature>
<feature type="strand" evidence="3">
    <location>
        <begin position="141"/>
        <end position="143"/>
    </location>
</feature>
<feature type="helix" evidence="4">
    <location>
        <begin position="150"/>
        <end position="154"/>
    </location>
</feature>
<feature type="strand" evidence="4">
    <location>
        <begin position="155"/>
        <end position="157"/>
    </location>
</feature>
<feature type="helix" evidence="4">
    <location>
        <begin position="158"/>
        <end position="161"/>
    </location>
</feature>
<feature type="helix" evidence="4">
    <location>
        <begin position="163"/>
        <end position="188"/>
    </location>
</feature>
<feature type="helix" evidence="4">
    <location>
        <begin position="192"/>
        <end position="212"/>
    </location>
</feature>
<feature type="strand" evidence="3">
    <location>
        <begin position="218"/>
        <end position="220"/>
    </location>
</feature>
<feature type="strand" evidence="4">
    <location>
        <begin position="225"/>
        <end position="231"/>
    </location>
</feature>
<feature type="helix" evidence="4">
    <location>
        <begin position="242"/>
        <end position="256"/>
    </location>
</feature>
<feature type="strand" evidence="4">
    <location>
        <begin position="263"/>
        <end position="266"/>
    </location>
</feature>
<feature type="helix" evidence="4">
    <location>
        <begin position="277"/>
        <end position="279"/>
    </location>
</feature>
<feature type="helix" evidence="4">
    <location>
        <begin position="280"/>
        <end position="292"/>
    </location>
</feature>
<feature type="strand" evidence="4">
    <location>
        <begin position="296"/>
        <end position="304"/>
    </location>
</feature>
<feature type="strand" evidence="4">
    <location>
        <begin position="308"/>
        <end position="310"/>
    </location>
</feature>
<feature type="strand" evidence="4">
    <location>
        <begin position="314"/>
        <end position="325"/>
    </location>
</feature>
<feature type="strand" evidence="4">
    <location>
        <begin position="327"/>
        <end position="329"/>
    </location>
</feature>
<feature type="turn" evidence="4">
    <location>
        <begin position="335"/>
        <end position="337"/>
    </location>
</feature>
<feature type="helix" evidence="4">
    <location>
        <begin position="343"/>
        <end position="352"/>
    </location>
</feature>
<feature type="strand" evidence="4">
    <location>
        <begin position="370"/>
        <end position="372"/>
    </location>
</feature>
<feature type="strand" evidence="4">
    <location>
        <begin position="375"/>
        <end position="381"/>
    </location>
</feature>
<feature type="helix" evidence="4">
    <location>
        <begin position="382"/>
        <end position="386"/>
    </location>
</feature>
<feature type="helix" evidence="4">
    <location>
        <begin position="388"/>
        <end position="395"/>
    </location>
</feature>
<feature type="strand" evidence="4">
    <location>
        <begin position="399"/>
        <end position="405"/>
    </location>
</feature>
<feature type="helix" evidence="4">
    <location>
        <begin position="408"/>
        <end position="410"/>
    </location>
</feature>
<feature type="strand" evidence="3">
    <location>
        <begin position="412"/>
        <end position="414"/>
    </location>
</feature>
<feature type="helix" evidence="4">
    <location>
        <begin position="415"/>
        <end position="430"/>
    </location>
</feature>
<feature type="strand" evidence="4">
    <location>
        <begin position="434"/>
        <end position="441"/>
    </location>
</feature>
<feature type="strand" evidence="4">
    <location>
        <begin position="444"/>
        <end position="446"/>
    </location>
</feature>
<feature type="strand" evidence="4">
    <location>
        <begin position="452"/>
        <end position="455"/>
    </location>
</feature>
<feature type="strand" evidence="3">
    <location>
        <begin position="458"/>
        <end position="460"/>
    </location>
</feature>
<feature type="strand" evidence="4">
    <location>
        <begin position="462"/>
        <end position="468"/>
    </location>
</feature>
<feature type="strand" evidence="4">
    <location>
        <begin position="471"/>
        <end position="473"/>
    </location>
</feature>
<feature type="helix" evidence="4">
    <location>
        <begin position="476"/>
        <end position="480"/>
    </location>
</feature>
<feature type="helix" evidence="4">
    <location>
        <begin position="483"/>
        <end position="500"/>
    </location>
</feature>
<protein>
    <recommendedName>
        <fullName evidence="1">Apolipoprotein N-acyltransferase</fullName>
        <shortName evidence="1">ALP N-acyltransferase</shortName>
        <ecNumber evidence="1">2.3.1.269</ecNumber>
    </recommendedName>
    <alternativeName>
        <fullName>Copper homeostasis protein CutE homolog</fullName>
    </alternativeName>
</protein>
<organism>
    <name type="scientific">Pseudomonas aeruginosa (strain ATCC 15692 / DSM 22644 / CIP 104116 / JCM 14847 / LMG 12228 / 1C / PRS 101 / PAO1)</name>
    <dbReference type="NCBI Taxonomy" id="208964"/>
    <lineage>
        <taxon>Bacteria</taxon>
        <taxon>Pseudomonadati</taxon>
        <taxon>Pseudomonadota</taxon>
        <taxon>Gammaproteobacteria</taxon>
        <taxon>Pseudomonadales</taxon>
        <taxon>Pseudomonadaceae</taxon>
        <taxon>Pseudomonas</taxon>
    </lineage>
</organism>
<comment type="function">
    <text evidence="1">Catalyzes the phospholipid dependent N-acylation of the N-terminal cysteine of apolipoprotein, the last step in lipoprotein maturation.</text>
</comment>
<comment type="catalytic activity">
    <reaction evidence="1">
        <text>N-terminal S-1,2-diacyl-sn-glyceryl-L-cysteinyl-[lipoprotein] + a glycerophospholipid = N-acyl-S-1,2-diacyl-sn-glyceryl-L-cysteinyl-[lipoprotein] + a 2-acyl-sn-glycero-3-phospholipid + H(+)</text>
        <dbReference type="Rhea" id="RHEA:48228"/>
        <dbReference type="Rhea" id="RHEA-COMP:14681"/>
        <dbReference type="Rhea" id="RHEA-COMP:14684"/>
        <dbReference type="ChEBI" id="CHEBI:15378"/>
        <dbReference type="ChEBI" id="CHEBI:136912"/>
        <dbReference type="ChEBI" id="CHEBI:140656"/>
        <dbReference type="ChEBI" id="CHEBI:140657"/>
        <dbReference type="ChEBI" id="CHEBI:140660"/>
        <dbReference type="EC" id="2.3.1.269"/>
    </reaction>
</comment>
<comment type="pathway">
    <text evidence="1">Protein modification; lipoprotein biosynthesis (N-acyl transfer).</text>
</comment>
<comment type="subcellular location">
    <subcellularLocation>
        <location evidence="1">Cell inner membrane</location>
        <topology evidence="1">Multi-pass membrane protein</topology>
    </subcellularLocation>
</comment>
<comment type="similarity">
    <text evidence="1 2">Belongs to the CN hydrolase family. Apolipoprotein N-acyltransferase subfamily.</text>
</comment>